<accession>J9R1J8</accession>
<accession>D8QQD2</accession>
<comment type="function">
    <text evidence="2">Sesquiterpene synthase converting farnesyl diphosphate to six sesquiterpenes, with beta-elemene, delta-cadinene and an unidentified oxygenated sesquiterpene as the major products. Has no diterpene synthase activity.</text>
</comment>
<comment type="cofactor">
    <cofactor evidence="1">
        <name>Mg(2+)</name>
        <dbReference type="ChEBI" id="CHEBI:18420"/>
    </cofactor>
    <text evidence="1">Binds 3 Mg(2+) ions per subunit.</text>
</comment>
<comment type="pathway">
    <text>Secondary metabolite biosynthesis; terpenoid biosynthesis.</text>
</comment>
<comment type="induction">
    <text evidence="2">Up-regulated by alamethicin treatment.</text>
</comment>
<comment type="domain">
    <text evidence="1">The Asp-Asp-Xaa-Xaa-Asp/Glu (DDXXD/E) motif is important for the catalytic activity, presumably through binding to Mg(2+).</text>
</comment>
<comment type="miscellaneous">
    <text>Selaginella moellendorffii contains two distinct types of functional terpene synthases (TPS) genes, the typical seed plants TPS genes (SmTPSs) and a microbial type TPS genes (SmMTPSLs).</text>
</comment>
<comment type="similarity">
    <text evidence="3">Belongs to the terpene synthase family.</text>
</comment>
<proteinExistence type="evidence at protein level"/>
<name>MTS1_SELML</name>
<protein>
    <recommendedName>
        <fullName>Microbial Terpene synthase-like protein 1</fullName>
        <shortName>SmMTPSL1</shortName>
        <ecNumber>4.2.3.-</ecNumber>
    </recommendedName>
</protein>
<dbReference type="EC" id="4.2.3.-"/>
<dbReference type="EMBL" id="JX413784">
    <property type="protein sequence ID" value="AFR34004.1"/>
    <property type="molecule type" value="mRNA"/>
</dbReference>
<dbReference type="EMBL" id="GL377565">
    <property type="protein sequence ID" value="EFJ38437.1"/>
    <property type="molecule type" value="Genomic_DNA"/>
</dbReference>
<dbReference type="SMR" id="J9R1J8"/>
<dbReference type="STRING" id="88036.J9R1J8"/>
<dbReference type="EnsemblPlants" id="EFJ38437">
    <property type="protein sequence ID" value="EFJ38437"/>
    <property type="gene ID" value="SELMODRAFT_402353"/>
</dbReference>
<dbReference type="Gramene" id="EFJ38437">
    <property type="protein sequence ID" value="EFJ38437"/>
    <property type="gene ID" value="SELMODRAFT_402353"/>
</dbReference>
<dbReference type="KEGG" id="smo:SELMODRAFT_402353"/>
<dbReference type="eggNOG" id="ENOG502SJ0F">
    <property type="taxonomic scope" value="Eukaryota"/>
</dbReference>
<dbReference type="HOGENOM" id="CLU_042538_2_1_1"/>
<dbReference type="InParanoid" id="J9R1J8"/>
<dbReference type="OrthoDB" id="2861623at2759"/>
<dbReference type="UniPathway" id="UPA00213"/>
<dbReference type="Proteomes" id="UP000001514">
    <property type="component" value="Unassembled WGS sequence"/>
</dbReference>
<dbReference type="GO" id="GO:0046872">
    <property type="term" value="F:metal ion binding"/>
    <property type="evidence" value="ECO:0007669"/>
    <property type="project" value="UniProtKB-KW"/>
</dbReference>
<dbReference type="GO" id="GO:0010333">
    <property type="term" value="F:terpene synthase activity"/>
    <property type="evidence" value="ECO:0007669"/>
    <property type="project" value="InterPro"/>
</dbReference>
<dbReference type="GO" id="GO:0016114">
    <property type="term" value="P:terpenoid biosynthetic process"/>
    <property type="evidence" value="ECO:0007669"/>
    <property type="project" value="UniProtKB-UniPathway"/>
</dbReference>
<dbReference type="Gene3D" id="1.10.600.10">
    <property type="entry name" value="Farnesyl Diphosphate Synthase"/>
    <property type="match status" value="1"/>
</dbReference>
<dbReference type="InterPro" id="IPR008949">
    <property type="entry name" value="Isoprenoid_synthase_dom_sf"/>
</dbReference>
<dbReference type="InterPro" id="IPR034686">
    <property type="entry name" value="Terpene_cyclase-like_2"/>
</dbReference>
<dbReference type="PANTHER" id="PTHR35201:SF4">
    <property type="entry name" value="BETA-PINACENE SYNTHASE-RELATED"/>
    <property type="match status" value="1"/>
</dbReference>
<dbReference type="PANTHER" id="PTHR35201">
    <property type="entry name" value="TERPENE SYNTHASE"/>
    <property type="match status" value="1"/>
</dbReference>
<dbReference type="Pfam" id="PF19086">
    <property type="entry name" value="Terpene_syn_C_2"/>
    <property type="match status" value="1"/>
</dbReference>
<dbReference type="SFLD" id="SFLDS00005">
    <property type="entry name" value="Isoprenoid_Synthase_Type_I"/>
    <property type="match status" value="1"/>
</dbReference>
<dbReference type="SFLD" id="SFLDG01020">
    <property type="entry name" value="Terpene_Cyclase_Like_2"/>
    <property type="match status" value="1"/>
</dbReference>
<dbReference type="SUPFAM" id="SSF48576">
    <property type="entry name" value="Terpenoid synthases"/>
    <property type="match status" value="1"/>
</dbReference>
<sequence>MAILSIVSIFAAEKSYSIPPASNKLLASPALNPLYDAKADAEINVWCDEFLKLQPGSEKSVFIRESRLGLLAAYAYPSISYEKIVPVAKFIAWLFLADDILDNPEISSSDMRNVATAYKMVFKGRFDEAALLVKNQELLRQVKMLSEVLKELSLHLVDKSGRFMNSMTKVLDMFEIESNWLHKQIVPNLDTYMWLREITSGVAPCFAMLDGLLQLGLEERGVLDHPLIRKVEEIGTHHIALHNDLISFRKEWAKGNYLNAVPILASIHKCGLNEAIAMLASMVEDLEKEFIGTKQEIISSGLARKQGVMDYVNGVEVWMAANAEWGWLSARYHGIGWIPPPEKSGTFQL</sequence>
<organism>
    <name type="scientific">Selaginella moellendorffii</name>
    <name type="common">Spikemoss</name>
    <dbReference type="NCBI Taxonomy" id="88036"/>
    <lineage>
        <taxon>Eukaryota</taxon>
        <taxon>Viridiplantae</taxon>
        <taxon>Streptophyta</taxon>
        <taxon>Embryophyta</taxon>
        <taxon>Tracheophyta</taxon>
        <taxon>Lycopodiopsida</taxon>
        <taxon>Selaginellales</taxon>
        <taxon>Selaginellaceae</taxon>
        <taxon>Selaginella</taxon>
    </lineage>
</organism>
<keyword id="KW-0456">Lyase</keyword>
<keyword id="KW-0460">Magnesium</keyword>
<keyword id="KW-0479">Metal-binding</keyword>
<keyword id="KW-1185">Reference proteome</keyword>
<gene>
    <name type="ORF">SELMODRAFT_402353</name>
</gene>
<evidence type="ECO:0000250" key="1"/>
<evidence type="ECO:0000269" key="2">
    <source>
    </source>
</evidence>
<evidence type="ECO:0000305" key="3"/>
<reference key="1">
    <citation type="journal article" date="2012" name="Proc. Natl. Acad. Sci. U.S.A.">
        <title>Nonseed plant Selaginella moellendorfii has both seed plant and microbial types of terpene synthases.</title>
        <authorList>
            <person name="Li G."/>
            <person name="Kollner T.G."/>
            <person name="Yin Y."/>
            <person name="Jiang Y."/>
            <person name="Chen H."/>
            <person name="Xu Y."/>
            <person name="Gershenzon J."/>
            <person name="Pichersky E."/>
            <person name="Chen F."/>
        </authorList>
    </citation>
    <scope>NUCLEOTIDE SEQUENCE [MRNA]</scope>
    <scope>FUNCTION</scope>
    <scope>CATALYTIC ACTIVITY</scope>
    <scope>INDUCTION BY ELICITOR</scope>
    <scope>GENE FAMILY</scope>
    <scope>NOMENCLATURE</scope>
</reference>
<reference key="2">
    <citation type="journal article" date="2011" name="Science">
        <title>The Selaginella genome identifies genetic changes associated with the evolution of vascular plants.</title>
        <authorList>
            <person name="Banks J.A."/>
            <person name="Nishiyama T."/>
            <person name="Hasebe M."/>
            <person name="Bowman J.L."/>
            <person name="Gribskov M."/>
            <person name="dePamphilis C."/>
            <person name="Albert V.A."/>
            <person name="Aono N."/>
            <person name="Aoyama T."/>
            <person name="Ambrose B.A."/>
            <person name="Ashton N.W."/>
            <person name="Axtell M.J."/>
            <person name="Barker E."/>
            <person name="Barker M.S."/>
            <person name="Bennetzen J.L."/>
            <person name="Bonawitz N.D."/>
            <person name="Chapple C."/>
            <person name="Cheng C."/>
            <person name="Correa L.G."/>
            <person name="Dacre M."/>
            <person name="DeBarry J."/>
            <person name="Dreyer I."/>
            <person name="Elias M."/>
            <person name="Engstrom E.M."/>
            <person name="Estelle M."/>
            <person name="Feng L."/>
            <person name="Finet C."/>
            <person name="Floyd S.K."/>
            <person name="Frommer W.B."/>
            <person name="Fujita T."/>
            <person name="Gramzow L."/>
            <person name="Gutensohn M."/>
            <person name="Harholt J."/>
            <person name="Hattori M."/>
            <person name="Heyl A."/>
            <person name="Hirai T."/>
            <person name="Hiwatashi Y."/>
            <person name="Ishikawa M."/>
            <person name="Iwata M."/>
            <person name="Karol K.G."/>
            <person name="Koehler B."/>
            <person name="Kolukisaoglu U."/>
            <person name="Kubo M."/>
            <person name="Kurata T."/>
            <person name="Lalonde S."/>
            <person name="Li K."/>
            <person name="Li Y."/>
            <person name="Litt A."/>
            <person name="Lyons E."/>
            <person name="Manning G."/>
            <person name="Maruyama T."/>
            <person name="Michael T.P."/>
            <person name="Mikami K."/>
            <person name="Miyazaki S."/>
            <person name="Morinaga S."/>
            <person name="Murata T."/>
            <person name="Mueller-Roeber B."/>
            <person name="Nelson D.R."/>
            <person name="Obara M."/>
            <person name="Oguri Y."/>
            <person name="Olmstead R.G."/>
            <person name="Onodera N."/>
            <person name="Petersen B.L."/>
            <person name="Pils B."/>
            <person name="Prigge M."/>
            <person name="Rensing S.A."/>
            <person name="Riano-Pachon D.M."/>
            <person name="Roberts A.W."/>
            <person name="Sato Y."/>
            <person name="Scheller H.V."/>
            <person name="Schulz B."/>
            <person name="Schulz C."/>
            <person name="Shakirov E.V."/>
            <person name="Shibagaki N."/>
            <person name="Shinohara N."/>
            <person name="Shippen D.E."/>
            <person name="Soerensen I."/>
            <person name="Sotooka R."/>
            <person name="Sugimoto N."/>
            <person name="Sugita M."/>
            <person name="Sumikawa N."/>
            <person name="Tanurdzic M."/>
            <person name="Theissen G."/>
            <person name="Ulvskov P."/>
            <person name="Wakazuki S."/>
            <person name="Weng J.K."/>
            <person name="Willats W.W."/>
            <person name="Wipf D."/>
            <person name="Wolf P.G."/>
            <person name="Yang L."/>
            <person name="Zimmer A.D."/>
            <person name="Zhu Q."/>
            <person name="Mitros T."/>
            <person name="Hellsten U."/>
            <person name="Loque D."/>
            <person name="Otillar R."/>
            <person name="Salamov A."/>
            <person name="Schmutz J."/>
            <person name="Shapiro H."/>
            <person name="Lindquist E."/>
            <person name="Lucas S."/>
            <person name="Rokhsar D."/>
            <person name="Grigoriev I.V."/>
        </authorList>
    </citation>
    <scope>NUCLEOTIDE SEQUENCE [LARGE SCALE GENOMIC DNA]</scope>
</reference>
<feature type="chain" id="PRO_0000421940" description="Microbial Terpene synthase-like protein 1">
    <location>
        <begin position="1"/>
        <end position="349"/>
    </location>
</feature>
<feature type="short sequence motif" description="DDXXD motif">
    <location>
        <begin position="98"/>
        <end position="102"/>
    </location>
</feature>
<feature type="binding site" evidence="1">
    <location>
        <position position="98"/>
    </location>
    <ligand>
        <name>Mg(2+)</name>
        <dbReference type="ChEBI" id="CHEBI:18420"/>
        <label>1</label>
    </ligand>
</feature>
<feature type="binding site" evidence="1">
    <location>
        <position position="98"/>
    </location>
    <ligand>
        <name>Mg(2+)</name>
        <dbReference type="ChEBI" id="CHEBI:18420"/>
        <label>2</label>
    </ligand>
</feature>
<feature type="binding site" evidence="1">
    <location>
        <position position="102"/>
    </location>
    <ligand>
        <name>Mg(2+)</name>
        <dbReference type="ChEBI" id="CHEBI:18420"/>
        <label>1</label>
    </ligand>
</feature>
<feature type="binding site" evidence="1">
    <location>
        <position position="102"/>
    </location>
    <ligand>
        <name>Mg(2+)</name>
        <dbReference type="ChEBI" id="CHEBI:18420"/>
        <label>2</label>
    </ligand>
</feature>
<feature type="binding site" evidence="1">
    <location>
        <position position="243"/>
    </location>
    <ligand>
        <name>Mg(2+)</name>
        <dbReference type="ChEBI" id="CHEBI:18420"/>
        <label>3</label>
    </ligand>
</feature>
<feature type="binding site" evidence="1">
    <location>
        <position position="247"/>
    </location>
    <ligand>
        <name>Mg(2+)</name>
        <dbReference type="ChEBI" id="CHEBI:18420"/>
        <label>3</label>
    </ligand>
</feature>
<feature type="sequence conflict" description="In Ref. 1; AFR34004." evidence="3" ref="1">
    <original>A</original>
    <variation>T</variation>
    <location>
        <position position="321"/>
    </location>
</feature>